<evidence type="ECO:0000255" key="1">
    <source>
        <dbReference type="HAMAP-Rule" id="MF_01503"/>
    </source>
</evidence>
<gene>
    <name type="ordered locus">NT01CX_2250</name>
</gene>
<dbReference type="EMBL" id="CP000382">
    <property type="protein sequence ID" value="ABK61707.1"/>
    <property type="molecule type" value="Genomic_DNA"/>
</dbReference>
<dbReference type="SMR" id="A0Q121"/>
<dbReference type="STRING" id="386415.NT01CX_2250"/>
<dbReference type="KEGG" id="cno:NT01CX_2250"/>
<dbReference type="eggNOG" id="COG2052">
    <property type="taxonomic scope" value="Bacteria"/>
</dbReference>
<dbReference type="HOGENOM" id="CLU_165326_0_0_9"/>
<dbReference type="Proteomes" id="UP000008220">
    <property type="component" value="Chromosome"/>
</dbReference>
<dbReference type="HAMAP" id="MF_01503">
    <property type="entry name" value="RemA"/>
    <property type="match status" value="1"/>
</dbReference>
<dbReference type="InterPro" id="IPR007169">
    <property type="entry name" value="RemA-like"/>
</dbReference>
<dbReference type="NCBIfam" id="NF046064">
    <property type="entry name" value="MtxBflmRegRemA"/>
    <property type="match status" value="1"/>
</dbReference>
<dbReference type="NCBIfam" id="NF003315">
    <property type="entry name" value="PRK04323.1"/>
    <property type="match status" value="1"/>
</dbReference>
<dbReference type="PANTHER" id="PTHR38449:SF1">
    <property type="entry name" value="REGULATORY PROTEIN SSL2874-RELATED"/>
    <property type="match status" value="1"/>
</dbReference>
<dbReference type="PANTHER" id="PTHR38449">
    <property type="entry name" value="REGULATORY PROTEIN TM_1690-RELATED"/>
    <property type="match status" value="1"/>
</dbReference>
<dbReference type="Pfam" id="PF04025">
    <property type="entry name" value="RemA-like"/>
    <property type="match status" value="1"/>
</dbReference>
<protein>
    <recommendedName>
        <fullName evidence="1">Putative regulatory protein NT01CX_2250</fullName>
    </recommendedName>
</protein>
<keyword id="KW-1185">Reference proteome</keyword>
<sequence length="90" mass="9910">MSIKLINIGFGNIVSANRLVAIVSPESAPIKRIIQEARDRGMLIDATYGRRTRAVIITDSDHVILSAVQPETVAHRLSSKDEVNIDEVDE</sequence>
<proteinExistence type="inferred from homology"/>
<accession>A0Q121</accession>
<name>Y2250_CLONN</name>
<reference key="1">
    <citation type="journal article" date="2006" name="Nat. Biotechnol.">
        <title>The genome and transcriptomes of the anti-tumor agent Clostridium novyi-NT.</title>
        <authorList>
            <person name="Bettegowda C."/>
            <person name="Huang X."/>
            <person name="Lin J."/>
            <person name="Cheong I."/>
            <person name="Kohli M."/>
            <person name="Szabo S.A."/>
            <person name="Zhang X."/>
            <person name="Diaz L.A. Jr."/>
            <person name="Velculescu V.E."/>
            <person name="Parmigiani G."/>
            <person name="Kinzler K.W."/>
            <person name="Vogelstein B."/>
            <person name="Zhou S."/>
        </authorList>
    </citation>
    <scope>NUCLEOTIDE SEQUENCE [LARGE SCALE GENOMIC DNA]</scope>
    <source>
        <strain>NT</strain>
    </source>
</reference>
<comment type="similarity">
    <text evidence="1">Belongs to the RemA family.</text>
</comment>
<feature type="chain" id="PRO_0000294252" description="Putative regulatory protein NT01CX_2250">
    <location>
        <begin position="1"/>
        <end position="90"/>
    </location>
</feature>
<organism>
    <name type="scientific">Clostridium novyi (strain NT)</name>
    <dbReference type="NCBI Taxonomy" id="386415"/>
    <lineage>
        <taxon>Bacteria</taxon>
        <taxon>Bacillati</taxon>
        <taxon>Bacillota</taxon>
        <taxon>Clostridia</taxon>
        <taxon>Eubacteriales</taxon>
        <taxon>Clostridiaceae</taxon>
        <taxon>Clostridium</taxon>
    </lineage>
</organism>